<protein>
    <recommendedName>
        <fullName evidence="9">Ubiquitin conjugation factor E4 B</fullName>
        <ecNumber evidence="5">2.3.2.27</ecNumber>
    </recommendedName>
    <alternativeName>
        <fullName>RING-type E3 ubiquitin transferase E4 B</fullName>
    </alternativeName>
    <alternativeName>
        <fullName evidence="8">Ubiquitin fusion degradation protein 2</fullName>
    </alternativeName>
</protein>
<feature type="chain" id="PRO_0000194994" description="Ubiquitin conjugation factor E4 B">
    <location>
        <begin position="1"/>
        <end position="1173"/>
    </location>
</feature>
<feature type="domain" description="U-box">
    <location>
        <begin position="1098"/>
        <end position="1171"/>
    </location>
</feature>
<feature type="region of interest" description="Disordered" evidence="4">
    <location>
        <begin position="1"/>
        <end position="155"/>
    </location>
</feature>
<feature type="region of interest" description="Disordered" evidence="4">
    <location>
        <begin position="928"/>
        <end position="948"/>
    </location>
</feature>
<feature type="compositionally biased region" description="Low complexity" evidence="4">
    <location>
        <begin position="16"/>
        <end position="33"/>
    </location>
</feature>
<feature type="compositionally biased region" description="Polar residues" evidence="4">
    <location>
        <begin position="51"/>
        <end position="64"/>
    </location>
</feature>
<feature type="compositionally biased region" description="Low complexity" evidence="4">
    <location>
        <begin position="76"/>
        <end position="99"/>
    </location>
</feature>
<feature type="compositionally biased region" description="Basic and acidic residues" evidence="4">
    <location>
        <begin position="134"/>
        <end position="147"/>
    </location>
</feature>
<feature type="compositionally biased region" description="Low complexity" evidence="4">
    <location>
        <begin position="937"/>
        <end position="948"/>
    </location>
</feature>
<feature type="site" description="Cleavage; by caspase-3 and caspase-7" evidence="1">
    <location>
        <begin position="109"/>
        <end position="110"/>
    </location>
</feature>
<feature type="site" description="Cleavage; by caspase-6 and granzyme B" evidence="1">
    <location>
        <begin position="123"/>
        <end position="124"/>
    </location>
</feature>
<feature type="modified residue" description="N-acetylmethionine" evidence="2">
    <location>
        <position position="1"/>
    </location>
</feature>
<feature type="modified residue" description="Phosphoserine" evidence="2">
    <location>
        <position position="23"/>
    </location>
</feature>
<feature type="modified residue" description="Phosphoserine" evidence="12">
    <location>
        <position position="31"/>
    </location>
</feature>
<feature type="modified residue" description="Phosphoserine" evidence="2">
    <location>
        <position position="84"/>
    </location>
</feature>
<feature type="modified residue" description="Phosphoserine" evidence="12">
    <location>
        <position position="88"/>
    </location>
</feature>
<feature type="modified residue" description="Phosphoserine" evidence="12">
    <location>
        <position position="90"/>
    </location>
</feature>
<feature type="modified residue" description="Phosphoserine" evidence="12">
    <location>
        <position position="101"/>
    </location>
</feature>
<feature type="modified residue" description="Phosphoserine" evidence="12">
    <location>
        <position position="103"/>
    </location>
</feature>
<feature type="modified residue" description="Phosphoserine" evidence="2">
    <location>
        <position position="105"/>
    </location>
</feature>
<feature type="modified residue" description="Phosphoserine" evidence="2">
    <location>
        <position position="124"/>
    </location>
</feature>
<feature type="modified residue" description="Phosphoserine" evidence="2">
    <location>
        <position position="238"/>
    </location>
</feature>
<feature type="modified residue" description="Phosphoserine" evidence="12">
    <location>
        <position position="674"/>
    </location>
</feature>
<feature type="modified residue" description="Phosphoserine" evidence="12">
    <location>
        <position position="840"/>
    </location>
</feature>
<feature type="modified residue" description="Phosphoserine" evidence="2">
    <location>
        <position position="1136"/>
    </location>
</feature>
<feature type="mutagenesis site" description="Loss of E3 ubiquitin protein ligase activity." evidence="5">
    <original>P</original>
    <variation>A</variation>
    <location>
        <position position="1140"/>
    </location>
</feature>
<feature type="sequence conflict" description="In Ref. 1; AAG17287." evidence="9" ref="1">
    <original>L</original>
    <variation>P</variation>
    <location>
        <position position="298"/>
    </location>
</feature>
<feature type="sequence conflict" description="In Ref. 1; AAG17287 and 2; BAC56586." evidence="9" ref="1 2">
    <original>E</original>
    <variation>D</variation>
    <location>
        <position position="408"/>
    </location>
</feature>
<feature type="sequence conflict" description="In Ref. 3; BAC26672." evidence="9" ref="3">
    <original>S</original>
    <variation>T</variation>
    <location>
        <position position="674"/>
    </location>
</feature>
<feature type="sequence conflict" description="In Ref. 1; AAG17287." evidence="9" ref="1">
    <original>C</original>
    <variation>Y</variation>
    <location>
        <position position="697"/>
    </location>
</feature>
<feature type="sequence conflict" description="In Ref. 3; BAC26672." evidence="9" ref="3">
    <original>E</original>
    <variation>K</variation>
    <location>
        <position position="753"/>
    </location>
</feature>
<feature type="turn" evidence="13">
    <location>
        <begin position="1101"/>
        <end position="1103"/>
    </location>
</feature>
<feature type="turn" evidence="13">
    <location>
        <begin position="1106"/>
        <end position="1108"/>
    </location>
</feature>
<feature type="strand" evidence="13">
    <location>
        <begin position="1113"/>
        <end position="1117"/>
    </location>
</feature>
<feature type="strand" evidence="13">
    <location>
        <begin position="1123"/>
        <end position="1125"/>
    </location>
</feature>
<feature type="helix" evidence="13">
    <location>
        <begin position="1126"/>
        <end position="1135"/>
    </location>
</feature>
<feature type="turn" evidence="13">
    <location>
        <begin position="1140"/>
        <end position="1142"/>
    </location>
</feature>
<feature type="helix" evidence="13">
    <location>
        <begin position="1148"/>
        <end position="1150"/>
    </location>
</feature>
<feature type="helix" evidence="13">
    <location>
        <begin position="1155"/>
        <end position="1170"/>
    </location>
</feature>
<accession>Q9ES00</accession>
<accession>Q6DID4</accession>
<accession>Q9EQE0</accession>
<proteinExistence type="evidence at protein level"/>
<dbReference type="EC" id="2.3.2.27" evidence="5"/>
<dbReference type="EMBL" id="AF260924">
    <property type="protein sequence ID" value="AAG17285.1"/>
    <property type="status" value="ALT_TERM"/>
    <property type="molecule type" value="mRNA"/>
</dbReference>
<dbReference type="EMBL" id="AF260926">
    <property type="protein sequence ID" value="AAG17287.1"/>
    <property type="molecule type" value="mRNA"/>
</dbReference>
<dbReference type="EMBL" id="AF260927">
    <property type="protein sequence ID" value="AAG38492.1"/>
    <property type="molecule type" value="Genomic_DNA"/>
</dbReference>
<dbReference type="EMBL" id="AB083274">
    <property type="protein sequence ID" value="BAC56586.1"/>
    <property type="molecule type" value="Genomic_DNA"/>
</dbReference>
<dbReference type="EMBL" id="AK029914">
    <property type="protein sequence ID" value="BAC26672.1"/>
    <property type="molecule type" value="mRNA"/>
</dbReference>
<dbReference type="EMBL" id="AL606973">
    <property type="status" value="NOT_ANNOTATED_CDS"/>
    <property type="molecule type" value="Genomic_DNA"/>
</dbReference>
<dbReference type="EMBL" id="BC075620">
    <property type="protein sequence ID" value="AAH75620.1"/>
    <property type="molecule type" value="mRNA"/>
</dbReference>
<dbReference type="CCDS" id="CCDS18958.1"/>
<dbReference type="RefSeq" id="NP_071305.2">
    <property type="nucleotide sequence ID" value="NM_022022.4"/>
</dbReference>
<dbReference type="PDB" id="2KR4">
    <property type="method" value="NMR"/>
    <property type="chains" value="A=1092-1173"/>
</dbReference>
<dbReference type="PDBsum" id="2KR4"/>
<dbReference type="BMRB" id="Q9ES00"/>
<dbReference type="SMR" id="Q9ES00"/>
<dbReference type="BioGRID" id="211009">
    <property type="interactions" value="20"/>
</dbReference>
<dbReference type="FunCoup" id="Q9ES00">
    <property type="interactions" value="4732"/>
</dbReference>
<dbReference type="IntAct" id="Q9ES00">
    <property type="interactions" value="2"/>
</dbReference>
<dbReference type="STRING" id="10090.ENSMUSP00000099501"/>
<dbReference type="GlyGen" id="Q9ES00">
    <property type="glycosylation" value="1 site, 1 O-linked glycan (1 site)"/>
</dbReference>
<dbReference type="iPTMnet" id="Q9ES00"/>
<dbReference type="PhosphoSitePlus" id="Q9ES00"/>
<dbReference type="jPOST" id="Q9ES00"/>
<dbReference type="PaxDb" id="10090-ENSMUSP00000099501"/>
<dbReference type="PeptideAtlas" id="Q9ES00"/>
<dbReference type="ProteomicsDB" id="298448"/>
<dbReference type="Pumba" id="Q9ES00"/>
<dbReference type="Antibodypedia" id="13520">
    <property type="antibodies" value="191 antibodies from 31 providers"/>
</dbReference>
<dbReference type="DNASU" id="63958"/>
<dbReference type="Ensembl" id="ENSMUST00000103212.10">
    <property type="protein sequence ID" value="ENSMUSP00000099501.4"/>
    <property type="gene ID" value="ENSMUSG00000028960.21"/>
</dbReference>
<dbReference type="GeneID" id="63958"/>
<dbReference type="KEGG" id="mmu:63958"/>
<dbReference type="UCSC" id="uc012dpr.1">
    <property type="organism name" value="mouse"/>
</dbReference>
<dbReference type="AGR" id="MGI:1927086"/>
<dbReference type="CTD" id="10277"/>
<dbReference type="MGI" id="MGI:1927086">
    <property type="gene designation" value="Ube4b"/>
</dbReference>
<dbReference type="VEuPathDB" id="HostDB:ENSMUSG00000028960"/>
<dbReference type="eggNOG" id="KOG2042">
    <property type="taxonomic scope" value="Eukaryota"/>
</dbReference>
<dbReference type="GeneTree" id="ENSGT00390000009300"/>
<dbReference type="HOGENOM" id="CLU_003224_2_0_1"/>
<dbReference type="InParanoid" id="Q9ES00"/>
<dbReference type="OMA" id="SNAFMTN"/>
<dbReference type="OrthoDB" id="20295at2759"/>
<dbReference type="PhylomeDB" id="Q9ES00"/>
<dbReference type="TreeFam" id="TF300802"/>
<dbReference type="BRENDA" id="2.3.2.B12">
    <property type="organism ID" value="3474"/>
</dbReference>
<dbReference type="UniPathway" id="UPA00143"/>
<dbReference type="BioGRID-ORCS" id="63958">
    <property type="hits" value="16 hits in 81 CRISPR screens"/>
</dbReference>
<dbReference type="ChiTaRS" id="Ube4b">
    <property type="organism name" value="mouse"/>
</dbReference>
<dbReference type="EvolutionaryTrace" id="Q9ES00"/>
<dbReference type="PRO" id="PR:Q9ES00"/>
<dbReference type="Proteomes" id="UP000000589">
    <property type="component" value="Chromosome 4"/>
</dbReference>
<dbReference type="RNAct" id="Q9ES00">
    <property type="molecule type" value="protein"/>
</dbReference>
<dbReference type="Bgee" id="ENSMUSG00000028960">
    <property type="expression patterns" value="Expressed in embryonic post-anal tail and 278 other cell types or tissues"/>
</dbReference>
<dbReference type="ExpressionAtlas" id="Q9ES00">
    <property type="expression patterns" value="baseline and differential"/>
</dbReference>
<dbReference type="GO" id="GO:0005737">
    <property type="term" value="C:cytoplasm"/>
    <property type="evidence" value="ECO:0000314"/>
    <property type="project" value="UniProtKB"/>
</dbReference>
<dbReference type="GO" id="GO:0005634">
    <property type="term" value="C:nucleus"/>
    <property type="evidence" value="ECO:0000314"/>
    <property type="project" value="MGI"/>
</dbReference>
<dbReference type="GO" id="GO:0000151">
    <property type="term" value="C:ubiquitin ligase complex"/>
    <property type="evidence" value="ECO:0000304"/>
    <property type="project" value="UniProtKB"/>
</dbReference>
<dbReference type="GO" id="GO:0005524">
    <property type="term" value="F:ATP binding"/>
    <property type="evidence" value="ECO:0000314"/>
    <property type="project" value="MGI"/>
</dbReference>
<dbReference type="GO" id="GO:0019899">
    <property type="term" value="F:enzyme binding"/>
    <property type="evidence" value="ECO:0000353"/>
    <property type="project" value="UniProtKB"/>
</dbReference>
<dbReference type="GO" id="GO:0061630">
    <property type="term" value="F:ubiquitin protein ligase activity"/>
    <property type="evidence" value="ECO:0000314"/>
    <property type="project" value="MGI"/>
</dbReference>
<dbReference type="GO" id="GO:0034450">
    <property type="term" value="F:ubiquitin-ubiquitin ligase activity"/>
    <property type="evidence" value="ECO:0000314"/>
    <property type="project" value="MGI"/>
</dbReference>
<dbReference type="GO" id="GO:0051082">
    <property type="term" value="F:unfolded protein binding"/>
    <property type="evidence" value="ECO:0000303"/>
    <property type="project" value="UniProtKB"/>
</dbReference>
<dbReference type="GO" id="GO:0036503">
    <property type="term" value="P:ERAD pathway"/>
    <property type="evidence" value="ECO:0007669"/>
    <property type="project" value="InterPro"/>
</dbReference>
<dbReference type="GO" id="GO:0008626">
    <property type="term" value="P:granzyme-mediated apoptotic signaling pathway"/>
    <property type="evidence" value="ECO:0000250"/>
    <property type="project" value="UniProtKB"/>
</dbReference>
<dbReference type="GO" id="GO:0031175">
    <property type="term" value="P:neuron projection development"/>
    <property type="evidence" value="ECO:0000315"/>
    <property type="project" value="MGI"/>
</dbReference>
<dbReference type="GO" id="GO:0043161">
    <property type="term" value="P:proteasome-mediated ubiquitin-dependent protein catabolic process"/>
    <property type="evidence" value="ECO:0000266"/>
    <property type="project" value="MGI"/>
</dbReference>
<dbReference type="GO" id="GO:0051865">
    <property type="term" value="P:protein autoubiquitination"/>
    <property type="evidence" value="ECO:0000314"/>
    <property type="project" value="MGI"/>
</dbReference>
<dbReference type="GO" id="GO:0030163">
    <property type="term" value="P:protein catabolic process"/>
    <property type="evidence" value="ECO:0000315"/>
    <property type="project" value="MGI"/>
</dbReference>
<dbReference type="GO" id="GO:0006457">
    <property type="term" value="P:protein folding"/>
    <property type="evidence" value="ECO:0000303"/>
    <property type="project" value="UniProtKB"/>
</dbReference>
<dbReference type="GO" id="GO:0006513">
    <property type="term" value="P:protein monoubiquitination"/>
    <property type="evidence" value="ECO:0000314"/>
    <property type="project" value="MGI"/>
</dbReference>
<dbReference type="GO" id="GO:0000209">
    <property type="term" value="P:protein polyubiquitination"/>
    <property type="evidence" value="ECO:0000314"/>
    <property type="project" value="MGI"/>
</dbReference>
<dbReference type="GO" id="GO:0016567">
    <property type="term" value="P:protein ubiquitination"/>
    <property type="evidence" value="ECO:0000314"/>
    <property type="project" value="MGI"/>
</dbReference>
<dbReference type="GO" id="GO:0034976">
    <property type="term" value="P:response to endoplasmic reticulum stress"/>
    <property type="evidence" value="ECO:0000315"/>
    <property type="project" value="MGI"/>
</dbReference>
<dbReference type="GO" id="GO:0009411">
    <property type="term" value="P:response to UV"/>
    <property type="evidence" value="ECO:0000250"/>
    <property type="project" value="UniProtKB"/>
</dbReference>
<dbReference type="GO" id="GO:0006511">
    <property type="term" value="P:ubiquitin-dependent protein catabolic process"/>
    <property type="evidence" value="ECO:0000315"/>
    <property type="project" value="MGI"/>
</dbReference>
<dbReference type="GO" id="GO:0003222">
    <property type="term" value="P:ventricular trabecula myocardium morphogenesis"/>
    <property type="evidence" value="ECO:0000315"/>
    <property type="project" value="MGI"/>
</dbReference>
<dbReference type="CDD" id="cd16658">
    <property type="entry name" value="RING-Ubox_UBE4B"/>
    <property type="match status" value="1"/>
</dbReference>
<dbReference type="FunFam" id="3.30.40.10:FF:000060">
    <property type="entry name" value="ubiquitin conjugation factor E4 B"/>
    <property type="match status" value="1"/>
</dbReference>
<dbReference type="Gene3D" id="3.30.40.10">
    <property type="entry name" value="Zinc/RING finger domain, C3HC4 (zinc finger)"/>
    <property type="match status" value="1"/>
</dbReference>
<dbReference type="InterPro" id="IPR019474">
    <property type="entry name" value="Ub_conjug_fac_E4_core"/>
</dbReference>
<dbReference type="InterPro" id="IPR045132">
    <property type="entry name" value="UBE4"/>
</dbReference>
<dbReference type="InterPro" id="IPR003613">
    <property type="entry name" value="Ubox_domain"/>
</dbReference>
<dbReference type="InterPro" id="IPR013083">
    <property type="entry name" value="Znf_RING/FYVE/PHD"/>
</dbReference>
<dbReference type="PANTHER" id="PTHR13931:SF2">
    <property type="entry name" value="UBIQUITIN CONJUGATION FACTOR E4 B"/>
    <property type="match status" value="1"/>
</dbReference>
<dbReference type="PANTHER" id="PTHR13931">
    <property type="entry name" value="UBIQUITINATION FACTOR E4"/>
    <property type="match status" value="1"/>
</dbReference>
<dbReference type="Pfam" id="PF04564">
    <property type="entry name" value="U-box"/>
    <property type="match status" value="1"/>
</dbReference>
<dbReference type="Pfam" id="PF10408">
    <property type="entry name" value="Ufd2P_core"/>
    <property type="match status" value="1"/>
</dbReference>
<dbReference type="SMART" id="SM00504">
    <property type="entry name" value="Ubox"/>
    <property type="match status" value="1"/>
</dbReference>
<dbReference type="SUPFAM" id="SSF57850">
    <property type="entry name" value="RING/U-box"/>
    <property type="match status" value="1"/>
</dbReference>
<dbReference type="PROSITE" id="PS51698">
    <property type="entry name" value="U_BOX"/>
    <property type="match status" value="1"/>
</dbReference>
<organism evidence="10">
    <name type="scientific">Mus musculus</name>
    <name type="common">Mouse</name>
    <dbReference type="NCBI Taxonomy" id="10090"/>
    <lineage>
        <taxon>Eukaryota</taxon>
        <taxon>Metazoa</taxon>
        <taxon>Chordata</taxon>
        <taxon>Craniata</taxon>
        <taxon>Vertebrata</taxon>
        <taxon>Euteleostomi</taxon>
        <taxon>Mammalia</taxon>
        <taxon>Eutheria</taxon>
        <taxon>Euarchontoglires</taxon>
        <taxon>Glires</taxon>
        <taxon>Rodentia</taxon>
        <taxon>Myomorpha</taxon>
        <taxon>Muroidea</taxon>
        <taxon>Muridae</taxon>
        <taxon>Murinae</taxon>
        <taxon>Mus</taxon>
        <taxon>Mus</taxon>
    </lineage>
</organism>
<gene>
    <name evidence="11" type="primary">Ube4b</name>
    <name evidence="11" type="synonym">Ufd2</name>
    <name evidence="11" type="synonym">Ufd2a</name>
</gene>
<reference evidence="9" key="1">
    <citation type="journal article" date="2000" name="Proc. Natl. Acad. Sci. U.S.A.">
        <title>A Ufd2/D4Cole1e chimeric protein and overexpression of Rbp7 in the slow Wallerian degeneration (WldS) mouse.</title>
        <authorList>
            <person name="Conforti L."/>
            <person name="Tarlton A."/>
            <person name="Mack T.G.A."/>
            <person name="Mi W."/>
            <person name="Buckmaster E.A."/>
            <person name="Wagner D."/>
            <person name="Perry V.H."/>
            <person name="Coleman M.P."/>
        </authorList>
    </citation>
    <scope>NUCLEOTIDE SEQUENCE [GENOMIC DNA / MRNA]</scope>
    <source>
        <strain>C57BL/Ola</strain>
        <tissue>Brain</tissue>
    </source>
</reference>
<reference evidence="9" key="2">
    <citation type="journal article" date="2003" name="Biochem. Biophys. Res. Commun.">
        <title>Characterization of the mouse gene for the U-box-type ubiquitin ligase UFD2a.</title>
        <authorList>
            <person name="Kaneko C."/>
            <person name="Hatakeyama S."/>
            <person name="Matsumoto M."/>
            <person name="Yada M."/>
            <person name="Nakayama K."/>
            <person name="Nakayama K."/>
        </authorList>
    </citation>
    <scope>NUCLEOTIDE SEQUENCE [GENOMIC DNA]</scope>
    <scope>INTERACTION WITH VCP</scope>
    <scope>SUBCELLULAR LOCATION</scope>
    <scope>TISSUE SPECIFICITY</scope>
    <source>
        <tissue>T-cell</tissue>
    </source>
</reference>
<reference key="3">
    <citation type="journal article" date="2005" name="Science">
        <title>The transcriptional landscape of the mammalian genome.</title>
        <authorList>
            <person name="Carninci P."/>
            <person name="Kasukawa T."/>
            <person name="Katayama S."/>
            <person name="Gough J."/>
            <person name="Frith M.C."/>
            <person name="Maeda N."/>
            <person name="Oyama R."/>
            <person name="Ravasi T."/>
            <person name="Lenhard B."/>
            <person name="Wells C."/>
            <person name="Kodzius R."/>
            <person name="Shimokawa K."/>
            <person name="Bajic V.B."/>
            <person name="Brenner S.E."/>
            <person name="Batalov S."/>
            <person name="Forrest A.R."/>
            <person name="Zavolan M."/>
            <person name="Davis M.J."/>
            <person name="Wilming L.G."/>
            <person name="Aidinis V."/>
            <person name="Allen J.E."/>
            <person name="Ambesi-Impiombato A."/>
            <person name="Apweiler R."/>
            <person name="Aturaliya R.N."/>
            <person name="Bailey T.L."/>
            <person name="Bansal M."/>
            <person name="Baxter L."/>
            <person name="Beisel K.W."/>
            <person name="Bersano T."/>
            <person name="Bono H."/>
            <person name="Chalk A.M."/>
            <person name="Chiu K.P."/>
            <person name="Choudhary V."/>
            <person name="Christoffels A."/>
            <person name="Clutterbuck D.R."/>
            <person name="Crowe M.L."/>
            <person name="Dalla E."/>
            <person name="Dalrymple B.P."/>
            <person name="de Bono B."/>
            <person name="Della Gatta G."/>
            <person name="di Bernardo D."/>
            <person name="Down T."/>
            <person name="Engstrom P."/>
            <person name="Fagiolini M."/>
            <person name="Faulkner G."/>
            <person name="Fletcher C.F."/>
            <person name="Fukushima T."/>
            <person name="Furuno M."/>
            <person name="Futaki S."/>
            <person name="Gariboldi M."/>
            <person name="Georgii-Hemming P."/>
            <person name="Gingeras T.R."/>
            <person name="Gojobori T."/>
            <person name="Green R.E."/>
            <person name="Gustincich S."/>
            <person name="Harbers M."/>
            <person name="Hayashi Y."/>
            <person name="Hensch T.K."/>
            <person name="Hirokawa N."/>
            <person name="Hill D."/>
            <person name="Huminiecki L."/>
            <person name="Iacono M."/>
            <person name="Ikeo K."/>
            <person name="Iwama A."/>
            <person name="Ishikawa T."/>
            <person name="Jakt M."/>
            <person name="Kanapin A."/>
            <person name="Katoh M."/>
            <person name="Kawasawa Y."/>
            <person name="Kelso J."/>
            <person name="Kitamura H."/>
            <person name="Kitano H."/>
            <person name="Kollias G."/>
            <person name="Krishnan S.P."/>
            <person name="Kruger A."/>
            <person name="Kummerfeld S.K."/>
            <person name="Kurochkin I.V."/>
            <person name="Lareau L.F."/>
            <person name="Lazarevic D."/>
            <person name="Lipovich L."/>
            <person name="Liu J."/>
            <person name="Liuni S."/>
            <person name="McWilliam S."/>
            <person name="Madan Babu M."/>
            <person name="Madera M."/>
            <person name="Marchionni L."/>
            <person name="Matsuda H."/>
            <person name="Matsuzawa S."/>
            <person name="Miki H."/>
            <person name="Mignone F."/>
            <person name="Miyake S."/>
            <person name="Morris K."/>
            <person name="Mottagui-Tabar S."/>
            <person name="Mulder N."/>
            <person name="Nakano N."/>
            <person name="Nakauchi H."/>
            <person name="Ng P."/>
            <person name="Nilsson R."/>
            <person name="Nishiguchi S."/>
            <person name="Nishikawa S."/>
            <person name="Nori F."/>
            <person name="Ohara O."/>
            <person name="Okazaki Y."/>
            <person name="Orlando V."/>
            <person name="Pang K.C."/>
            <person name="Pavan W.J."/>
            <person name="Pavesi G."/>
            <person name="Pesole G."/>
            <person name="Petrovsky N."/>
            <person name="Piazza S."/>
            <person name="Reed J."/>
            <person name="Reid J.F."/>
            <person name="Ring B.Z."/>
            <person name="Ringwald M."/>
            <person name="Rost B."/>
            <person name="Ruan Y."/>
            <person name="Salzberg S.L."/>
            <person name="Sandelin A."/>
            <person name="Schneider C."/>
            <person name="Schoenbach C."/>
            <person name="Sekiguchi K."/>
            <person name="Semple C.A."/>
            <person name="Seno S."/>
            <person name="Sessa L."/>
            <person name="Sheng Y."/>
            <person name="Shibata Y."/>
            <person name="Shimada H."/>
            <person name="Shimada K."/>
            <person name="Silva D."/>
            <person name="Sinclair B."/>
            <person name="Sperling S."/>
            <person name="Stupka E."/>
            <person name="Sugiura K."/>
            <person name="Sultana R."/>
            <person name="Takenaka Y."/>
            <person name="Taki K."/>
            <person name="Tammoja K."/>
            <person name="Tan S.L."/>
            <person name="Tang S."/>
            <person name="Taylor M.S."/>
            <person name="Tegner J."/>
            <person name="Teichmann S.A."/>
            <person name="Ueda H.R."/>
            <person name="van Nimwegen E."/>
            <person name="Verardo R."/>
            <person name="Wei C.L."/>
            <person name="Yagi K."/>
            <person name="Yamanishi H."/>
            <person name="Zabarovsky E."/>
            <person name="Zhu S."/>
            <person name="Zimmer A."/>
            <person name="Hide W."/>
            <person name="Bult C."/>
            <person name="Grimmond S.M."/>
            <person name="Teasdale R.D."/>
            <person name="Liu E.T."/>
            <person name="Brusic V."/>
            <person name="Quackenbush J."/>
            <person name="Wahlestedt C."/>
            <person name="Mattick J.S."/>
            <person name="Hume D.A."/>
            <person name="Kai C."/>
            <person name="Sasaki D."/>
            <person name="Tomaru Y."/>
            <person name="Fukuda S."/>
            <person name="Kanamori-Katayama M."/>
            <person name="Suzuki M."/>
            <person name="Aoki J."/>
            <person name="Arakawa T."/>
            <person name="Iida J."/>
            <person name="Imamura K."/>
            <person name="Itoh M."/>
            <person name="Kato T."/>
            <person name="Kawaji H."/>
            <person name="Kawagashira N."/>
            <person name="Kawashima T."/>
            <person name="Kojima M."/>
            <person name="Kondo S."/>
            <person name="Konno H."/>
            <person name="Nakano K."/>
            <person name="Ninomiya N."/>
            <person name="Nishio T."/>
            <person name="Okada M."/>
            <person name="Plessy C."/>
            <person name="Shibata K."/>
            <person name="Shiraki T."/>
            <person name="Suzuki S."/>
            <person name="Tagami M."/>
            <person name="Waki K."/>
            <person name="Watahiki A."/>
            <person name="Okamura-Oho Y."/>
            <person name="Suzuki H."/>
            <person name="Kawai J."/>
            <person name="Hayashizaki Y."/>
        </authorList>
    </citation>
    <scope>NUCLEOTIDE SEQUENCE [LARGE SCALE MRNA]</scope>
    <source>
        <strain>C57BL/6J</strain>
        <tissue>Testis</tissue>
    </source>
</reference>
<reference key="4">
    <citation type="journal article" date="2009" name="PLoS Biol.">
        <title>Lineage-specific biology revealed by a finished genome assembly of the mouse.</title>
        <authorList>
            <person name="Church D.M."/>
            <person name="Goodstadt L."/>
            <person name="Hillier L.W."/>
            <person name="Zody M.C."/>
            <person name="Goldstein S."/>
            <person name="She X."/>
            <person name="Bult C.J."/>
            <person name="Agarwala R."/>
            <person name="Cherry J.L."/>
            <person name="DiCuccio M."/>
            <person name="Hlavina W."/>
            <person name="Kapustin Y."/>
            <person name="Meric P."/>
            <person name="Maglott D."/>
            <person name="Birtle Z."/>
            <person name="Marques A.C."/>
            <person name="Graves T."/>
            <person name="Zhou S."/>
            <person name="Teague B."/>
            <person name="Potamousis K."/>
            <person name="Churas C."/>
            <person name="Place M."/>
            <person name="Herschleb J."/>
            <person name="Runnheim R."/>
            <person name="Forrest D."/>
            <person name="Amos-Landgraf J."/>
            <person name="Schwartz D.C."/>
            <person name="Cheng Z."/>
            <person name="Lindblad-Toh K."/>
            <person name="Eichler E.E."/>
            <person name="Ponting C.P."/>
        </authorList>
    </citation>
    <scope>NUCLEOTIDE SEQUENCE [LARGE SCALE GENOMIC DNA]</scope>
    <source>
        <strain>C57BL/6J</strain>
    </source>
</reference>
<reference key="5">
    <citation type="journal article" date="2004" name="Genome Res.">
        <title>The status, quality, and expansion of the NIH full-length cDNA project: the Mammalian Gene Collection (MGC).</title>
        <authorList>
            <consortium name="The MGC Project Team"/>
        </authorList>
    </citation>
    <scope>NUCLEOTIDE SEQUENCE [LARGE SCALE MRNA]</scope>
    <source>
        <strain>C57BL/6J</strain>
        <tissue>Brain</tissue>
    </source>
</reference>
<reference key="6">
    <citation type="journal article" date="2001" name="J. Biol. Chem.">
        <title>U box proteins as a new family of ubiquitin-protein ligases.</title>
        <authorList>
            <person name="Hatakeyama S."/>
            <person name="Yada M."/>
            <person name="Matsumoto M."/>
            <person name="Ishida N."/>
            <person name="Nakayama K.I."/>
        </authorList>
    </citation>
    <scope>FUNCTION</scope>
    <scope>CATALYTIC ACTIVITY</scope>
    <scope>PATHWAY</scope>
    <scope>SUBCELLULAR LOCATION</scope>
    <scope>TISSUE SPECIFICITY</scope>
    <scope>DOMAIN</scope>
    <scope>MUTAGENESIS OF PRO-1140</scope>
</reference>
<reference evidence="9" key="7">
    <citation type="journal article" date="2001" name="Nat. Neurosci.">
        <title>Wallerian degeneration of injured axons and synapses is delayed by a Ube4b/Nmnat chimeric gene.</title>
        <authorList>
            <person name="Mack T.G.A."/>
            <person name="Reiner M."/>
            <person name="Beirowski B."/>
            <person name="Mi W."/>
            <person name="Emanuelli M."/>
            <person name="Wagner D."/>
            <person name="Thomson D."/>
            <person name="Gillingwater T."/>
            <person name="Court F."/>
            <person name="Conforti L."/>
            <person name="Fernando F.S."/>
            <person name="Tarlton A."/>
            <person name="Andressen C."/>
            <person name="Addicks K."/>
            <person name="Magni G."/>
            <person name="Ribchester R.R."/>
            <person name="Perry V.H."/>
            <person name="Coleman M.P."/>
        </authorList>
    </citation>
    <scope>SUBCELLULAR LOCATION</scope>
    <scope>ROLE IN DELAY OF WALLERIAN DEGENERATION</scope>
</reference>
<reference key="8">
    <citation type="journal article" date="2004" name="Mol. Cell. Proteomics">
        <title>Phosphoproteomic analysis of the developing mouse brain.</title>
        <authorList>
            <person name="Ballif B.A."/>
            <person name="Villen J."/>
            <person name="Beausoleil S.A."/>
            <person name="Schwartz D."/>
            <person name="Gygi S.P."/>
        </authorList>
    </citation>
    <scope>IDENTIFICATION BY MASS SPECTROMETRY [LARGE SCALE ANALYSIS]</scope>
    <source>
        <tissue>Embryonic brain</tissue>
    </source>
</reference>
<reference key="9">
    <citation type="journal article" date="2007" name="Proc. Natl. Acad. Sci. U.S.A.">
        <title>Large-scale phosphorylation analysis of mouse liver.</title>
        <authorList>
            <person name="Villen J."/>
            <person name="Beausoleil S.A."/>
            <person name="Gerber S.A."/>
            <person name="Gygi S.P."/>
        </authorList>
    </citation>
    <scope>IDENTIFICATION BY MASS SPECTROMETRY [LARGE SCALE ANALYSIS]</scope>
    <source>
        <tissue>Liver</tissue>
    </source>
</reference>
<reference key="10">
    <citation type="journal article" date="2010" name="Cell">
        <title>A tissue-specific atlas of mouse protein phosphorylation and expression.</title>
        <authorList>
            <person name="Huttlin E.L."/>
            <person name="Jedrychowski M.P."/>
            <person name="Elias J.E."/>
            <person name="Goswami T."/>
            <person name="Rad R."/>
            <person name="Beausoleil S.A."/>
            <person name="Villen J."/>
            <person name="Haas W."/>
            <person name="Sowa M.E."/>
            <person name="Gygi S.P."/>
        </authorList>
    </citation>
    <scope>PHOSPHORYLATION [LARGE SCALE ANALYSIS] AT SER-31; SER-88; SER-90; SER-101; SER-103; SER-674 AND SER-840</scope>
    <scope>IDENTIFICATION BY MASS SPECTROMETRY [LARGE SCALE ANALYSIS]</scope>
    <source>
        <tissue>Brain</tissue>
        <tissue>Brown adipose tissue</tissue>
        <tissue>Heart</tissue>
        <tissue>Kidney</tissue>
        <tissue>Liver</tissue>
        <tissue>Lung</tissue>
        <tissue>Pancreas</tissue>
        <tissue>Spleen</tissue>
        <tissue>Testis</tissue>
    </source>
</reference>
<keyword id="KW-0002">3D-structure</keyword>
<keyword id="KW-0007">Acetylation</keyword>
<keyword id="KW-0963">Cytoplasm</keyword>
<keyword id="KW-0539">Nucleus</keyword>
<keyword id="KW-0597">Phosphoprotein</keyword>
<keyword id="KW-1185">Reference proteome</keyword>
<keyword id="KW-0808">Transferase</keyword>
<keyword id="KW-0833">Ubl conjugation pathway</keyword>
<evidence type="ECO:0000250" key="1"/>
<evidence type="ECO:0000250" key="2">
    <source>
        <dbReference type="UniProtKB" id="O95155"/>
    </source>
</evidence>
<evidence type="ECO:0000250" key="3">
    <source>
        <dbReference type="UniProtKB" id="P54860"/>
    </source>
</evidence>
<evidence type="ECO:0000256" key="4">
    <source>
        <dbReference type="SAM" id="MobiDB-lite"/>
    </source>
</evidence>
<evidence type="ECO:0000269" key="5">
    <source>
    </source>
</evidence>
<evidence type="ECO:0000269" key="6">
    <source>
    </source>
</evidence>
<evidence type="ECO:0000269" key="7">
    <source>
    </source>
</evidence>
<evidence type="ECO:0000303" key="8">
    <source>
    </source>
</evidence>
<evidence type="ECO:0000305" key="9"/>
<evidence type="ECO:0000312" key="10">
    <source>
        <dbReference type="EMBL" id="AAG17287.1"/>
    </source>
</evidence>
<evidence type="ECO:0000312" key="11">
    <source>
        <dbReference type="MGI" id="MGI:1927086"/>
    </source>
</evidence>
<evidence type="ECO:0007744" key="12">
    <source>
    </source>
</evidence>
<evidence type="ECO:0007829" key="13">
    <source>
        <dbReference type="PDB" id="2KR4"/>
    </source>
</evidence>
<comment type="function">
    <text evidence="2 3 5">Ubiquitin-protein ligase that probably functions as an E3 ligase in conjunction with specific E1 and E2 ligases (PubMed:11435423). May also function as an E4 ligase mediating the assembly of polyubiquitin chains on substrates ubiquitinated by another E3 ubiquitin ligase (By similarity). May regulate myosin assembly in striated muscles together with STUB1 and VCP/p97 by targeting myosin chaperone UNC45B for proteasomal degradation (By similarity).</text>
</comment>
<comment type="catalytic activity">
    <reaction evidence="5">
        <text>S-ubiquitinyl-[E2 ubiquitin-conjugating enzyme]-L-cysteine + [acceptor protein]-L-lysine = [E2 ubiquitin-conjugating enzyme]-L-cysteine + N(6)-ubiquitinyl-[acceptor protein]-L-lysine.</text>
        <dbReference type="EC" id="2.3.2.27"/>
    </reaction>
</comment>
<comment type="pathway">
    <text evidence="5">Protein modification; protein ubiquitination.</text>
</comment>
<comment type="subunit">
    <text evidence="2 7">Interacts with VCP (PubMed:12504083). Interacts with STUB1/CHIP and UNC45B (By similarity).</text>
</comment>
<comment type="subcellular location">
    <subcellularLocation>
        <location evidence="5 6 7">Cytoplasm</location>
    </subcellularLocation>
    <subcellularLocation>
        <location evidence="5">Nucleus</location>
    </subcellularLocation>
</comment>
<comment type="tissue specificity">
    <text evidence="5 7">Expressed predominantly in neuronal tissues. Also detected in liver, heart, brain, kidney and testis.</text>
</comment>
<comment type="domain">
    <text evidence="5">The U-box domain is required for the ubiquitin protein ligase activity.</text>
</comment>
<comment type="PTM">
    <text evidence="2">Proteolytically cleaved by caspases during apoptosis. Cleaved efficiently at Asp-123 by caspase-6 and granzyme B. Cleaved with approximately 10-fold less efficiency at Asp-109 by caspase-3 and caspase-7 (By similarity).</text>
</comment>
<comment type="miscellaneous">
    <text evidence="6">In strain C57BL/Ola, a 85 kb region on chromosome 4 containing Nmnat1 and Ube4b is triplicated. Ube4b becomes linked to Nmnat1 and encodes a fusion protein located in the nucleus which is responsible for the delayed Wallerian degeneration of injured axons in C57BL/Ola.</text>
</comment>
<comment type="similarity">
    <text evidence="9">Belongs to the ubiquitin conjugation factor E4 family.</text>
</comment>
<name>UBE4B_MOUSE</name>
<sequence length="1173" mass="133318">MEELSADEIRRRRLARLAGGQTSQPTTPLTSPQRENPPGPPIAASAPGPSQSLGLNVHNMTPATSPIGAAGVAHRSQSSEGVSSLSSSPSNSLETQSQSLSRSQSMDIDGVSCEKSMSQVDVDSGIENMEVDENDRREKRSLSDKEPSSGPEVSEEQALQLVCKIFRVSWKDRDRDVIFLSSLSAQFKQNPKEVFSDFKDLIGQILMEVLMMSTQTRDENPFASLTATSQPIATAARSPDRNLMLNTGSSSGTSPMFCNMGSFSTSSLSSLGASGGASNWDSYSDHFTIETCKETDMLNYLIECFDRVGIEEKKAPKMCSQPAVSQLLSNIRSQCISHTALVLQGSLTQPRSLQQPSFLVPYMLCRNLPYGFIQELVRTTHQDEEVFKQIFIPILQGLALAAKECSLESDYFKYPLMALGELCETKFGKTHPMCNLVASLPLWLPKSLSPGSGRELQRLSYLGAFFSFSVFAEDDAKVVEKYFSGPAITLENTRVVSQSLQHYLELGRQELFKILHSILLNGETREAALSYMAALVNANMKKAQMQADDRLVSTDGFMLNLLWVLQQLSTKIKLETVDPTYIFHPRCRITLPNDETRINATMEDVNERLTELYGDQPPFSEPKFPTECFFLTLHAHHLSILPSCRRYIRRLRAIRELNRTVEDLKNNESQWKDSPLATRHREMLKRCKTQLKKLVRCKACADAGLLDESFLRRCLNFYGLLIQLMLRILDPAYPDVTLPLNSEVPKVFAALPEFYVEDVAEFLFFIVQYSPQVLYEPCTQDIVMFLVVMLCNQNYIRNPYLVAKLVEVMFMTNPSVQPRTQKFFEMIENHPLSTKLLVPSLMKFYTDVEHTGATSEFYDKFTIRYHISTIFKSLWQNIAHHGTFMEEFNSGKQFVRYINMLINDTTFLLDESLESLKRIHEVQEEMKNKEQWDQLPRDQQQARQSQLAQDERVSRSYLALATETVDMFHLLTKQVQKPFLRPELGPRLAAMLNFNLQQLCGPKCRDLKVENPEKYGFEPKKLLDQLTDIYLQLDCARFAKAIADDQRSYSKELFEEVISKMRKAGIKSTIAIEKFKLLAEKVEEIVAKNARAEIDYSDAPDEFRDPLMDTLMTDPVRLPSGTVMDRSIILRHLLNSPTDPFNRQMLTESMLEPVPELKEQIQAWMREKQSSDH</sequence>